<proteinExistence type="inferred from homology"/>
<accession>Q0AZD9</accession>
<evidence type="ECO:0000255" key="1">
    <source>
        <dbReference type="HAMAP-Rule" id="MF_00173"/>
    </source>
</evidence>
<protein>
    <recommendedName>
        <fullName evidence="1">Arginine repressor</fullName>
    </recommendedName>
</protein>
<reference key="1">
    <citation type="journal article" date="2010" name="Environ. Microbiol.">
        <title>The genome of Syntrophomonas wolfei: new insights into syntrophic metabolism and biohydrogen production.</title>
        <authorList>
            <person name="Sieber J.R."/>
            <person name="Sims D.R."/>
            <person name="Han C."/>
            <person name="Kim E."/>
            <person name="Lykidis A."/>
            <person name="Lapidus A.L."/>
            <person name="McDonnald E."/>
            <person name="Rohlin L."/>
            <person name="Culley D.E."/>
            <person name="Gunsalus R."/>
            <person name="McInerney M.J."/>
        </authorList>
    </citation>
    <scope>NUCLEOTIDE SEQUENCE [LARGE SCALE GENOMIC DNA]</scope>
    <source>
        <strain>DSM 2245B / Goettingen</strain>
    </source>
</reference>
<feature type="chain" id="PRO_1000023609" description="Arginine repressor">
    <location>
        <begin position="1"/>
        <end position="153"/>
    </location>
</feature>
<organism>
    <name type="scientific">Syntrophomonas wolfei subsp. wolfei (strain DSM 2245B / Goettingen)</name>
    <dbReference type="NCBI Taxonomy" id="335541"/>
    <lineage>
        <taxon>Bacteria</taxon>
        <taxon>Bacillati</taxon>
        <taxon>Bacillota</taxon>
        <taxon>Clostridia</taxon>
        <taxon>Eubacteriales</taxon>
        <taxon>Syntrophomonadaceae</taxon>
        <taxon>Syntrophomonas</taxon>
    </lineage>
</organism>
<comment type="function">
    <text evidence="1">Regulates arginine biosynthesis genes.</text>
</comment>
<comment type="pathway">
    <text>Amino-acid biosynthesis; L-arginine biosynthesis [regulation].</text>
</comment>
<comment type="subcellular location">
    <subcellularLocation>
        <location evidence="1">Cytoplasm</location>
    </subcellularLocation>
</comment>
<comment type="similarity">
    <text evidence="1">Belongs to the ArgR family.</text>
</comment>
<name>ARGR_SYNWW</name>
<dbReference type="EMBL" id="CP000448">
    <property type="protein sequence ID" value="ABI67915.1"/>
    <property type="molecule type" value="Genomic_DNA"/>
</dbReference>
<dbReference type="RefSeq" id="WP_011640020.1">
    <property type="nucleotide sequence ID" value="NC_008346.1"/>
</dbReference>
<dbReference type="SMR" id="Q0AZD9"/>
<dbReference type="STRING" id="335541.Swol_0585"/>
<dbReference type="KEGG" id="swo:Swol_0585"/>
<dbReference type="eggNOG" id="COG1438">
    <property type="taxonomic scope" value="Bacteria"/>
</dbReference>
<dbReference type="HOGENOM" id="CLU_097103_3_0_9"/>
<dbReference type="OrthoDB" id="9807089at2"/>
<dbReference type="UniPathway" id="UPA00068"/>
<dbReference type="Proteomes" id="UP000001968">
    <property type="component" value="Chromosome"/>
</dbReference>
<dbReference type="GO" id="GO:0005737">
    <property type="term" value="C:cytoplasm"/>
    <property type="evidence" value="ECO:0007669"/>
    <property type="project" value="UniProtKB-SubCell"/>
</dbReference>
<dbReference type="GO" id="GO:0034618">
    <property type="term" value="F:arginine binding"/>
    <property type="evidence" value="ECO:0007669"/>
    <property type="project" value="InterPro"/>
</dbReference>
<dbReference type="GO" id="GO:0003677">
    <property type="term" value="F:DNA binding"/>
    <property type="evidence" value="ECO:0007669"/>
    <property type="project" value="UniProtKB-KW"/>
</dbReference>
<dbReference type="GO" id="GO:0003700">
    <property type="term" value="F:DNA-binding transcription factor activity"/>
    <property type="evidence" value="ECO:0007669"/>
    <property type="project" value="UniProtKB-UniRule"/>
</dbReference>
<dbReference type="GO" id="GO:0006526">
    <property type="term" value="P:L-arginine biosynthetic process"/>
    <property type="evidence" value="ECO:0007669"/>
    <property type="project" value="UniProtKB-UniPathway"/>
</dbReference>
<dbReference type="GO" id="GO:0051259">
    <property type="term" value="P:protein complex oligomerization"/>
    <property type="evidence" value="ECO:0007669"/>
    <property type="project" value="InterPro"/>
</dbReference>
<dbReference type="GO" id="GO:1900079">
    <property type="term" value="P:regulation of arginine biosynthetic process"/>
    <property type="evidence" value="ECO:0007669"/>
    <property type="project" value="UniProtKB-UniRule"/>
</dbReference>
<dbReference type="Gene3D" id="3.30.1360.40">
    <property type="match status" value="1"/>
</dbReference>
<dbReference type="Gene3D" id="1.10.10.10">
    <property type="entry name" value="Winged helix-like DNA-binding domain superfamily/Winged helix DNA-binding domain"/>
    <property type="match status" value="1"/>
</dbReference>
<dbReference type="HAMAP" id="MF_00173">
    <property type="entry name" value="Arg_repressor"/>
    <property type="match status" value="1"/>
</dbReference>
<dbReference type="InterPro" id="IPR001669">
    <property type="entry name" value="Arg_repress"/>
</dbReference>
<dbReference type="InterPro" id="IPR020899">
    <property type="entry name" value="Arg_repress_C"/>
</dbReference>
<dbReference type="InterPro" id="IPR036251">
    <property type="entry name" value="Arg_repress_C_sf"/>
</dbReference>
<dbReference type="InterPro" id="IPR020900">
    <property type="entry name" value="Arg_repress_DNA-bd"/>
</dbReference>
<dbReference type="InterPro" id="IPR036388">
    <property type="entry name" value="WH-like_DNA-bd_sf"/>
</dbReference>
<dbReference type="InterPro" id="IPR036390">
    <property type="entry name" value="WH_DNA-bd_sf"/>
</dbReference>
<dbReference type="NCBIfam" id="TIGR01529">
    <property type="entry name" value="argR_whole"/>
    <property type="match status" value="1"/>
</dbReference>
<dbReference type="PANTHER" id="PTHR34471">
    <property type="entry name" value="ARGININE REPRESSOR"/>
    <property type="match status" value="1"/>
</dbReference>
<dbReference type="PANTHER" id="PTHR34471:SF1">
    <property type="entry name" value="ARGININE REPRESSOR"/>
    <property type="match status" value="1"/>
</dbReference>
<dbReference type="Pfam" id="PF01316">
    <property type="entry name" value="Arg_repressor"/>
    <property type="match status" value="1"/>
</dbReference>
<dbReference type="Pfam" id="PF02863">
    <property type="entry name" value="Arg_repressor_C"/>
    <property type="match status" value="1"/>
</dbReference>
<dbReference type="PRINTS" id="PR01467">
    <property type="entry name" value="ARGREPRESSOR"/>
</dbReference>
<dbReference type="SUPFAM" id="SSF55252">
    <property type="entry name" value="C-terminal domain of arginine repressor"/>
    <property type="match status" value="1"/>
</dbReference>
<dbReference type="SUPFAM" id="SSF46785">
    <property type="entry name" value="Winged helix' DNA-binding domain"/>
    <property type="match status" value="1"/>
</dbReference>
<keyword id="KW-0028">Amino-acid biosynthesis</keyword>
<keyword id="KW-0055">Arginine biosynthesis</keyword>
<keyword id="KW-0963">Cytoplasm</keyword>
<keyword id="KW-0238">DNA-binding</keyword>
<keyword id="KW-1185">Reference proteome</keyword>
<keyword id="KW-0678">Repressor</keyword>
<keyword id="KW-0804">Transcription</keyword>
<keyword id="KW-0805">Transcription regulation</keyword>
<sequence length="153" mass="16923">MKLRRQLCIIDIINQKEVATQEELCETLKNQGFDVTQATVSRDIKELKLIKVADKDGYHYALPDTPGVKGSFERMKRVIEDSVLGLDYSENLIIIKTLPGSAHAVASLIDSAEWPTIIGTVAGDDTILAVVKPKEAAPGIVEEFEQLMLKSNR</sequence>
<gene>
    <name evidence="1" type="primary">argR</name>
    <name type="ordered locus">Swol_0585</name>
</gene>